<gene>
    <name type="ordered locus">MK1214</name>
</gene>
<protein>
    <recommendedName>
        <fullName evidence="1">UPF0210 protein MK1214</fullName>
    </recommendedName>
</protein>
<feature type="chain" id="PRO_0000070565" description="UPF0210 protein MK1214">
    <location>
        <begin position="1"/>
        <end position="450"/>
    </location>
</feature>
<name>Y1214_METKA</name>
<dbReference type="EMBL" id="AE009439">
    <property type="protein sequence ID" value="AAM02427.1"/>
    <property type="molecule type" value="Genomic_DNA"/>
</dbReference>
<dbReference type="RefSeq" id="WP_011019582.1">
    <property type="nucleotide sequence ID" value="NC_003551.1"/>
</dbReference>
<dbReference type="SMR" id="Q8TW23"/>
<dbReference type="STRING" id="190192.MK1214"/>
<dbReference type="PaxDb" id="190192-MK1214"/>
<dbReference type="EnsemblBacteria" id="AAM02427">
    <property type="protein sequence ID" value="AAM02427"/>
    <property type="gene ID" value="MK1214"/>
</dbReference>
<dbReference type="GeneID" id="1477809"/>
<dbReference type="KEGG" id="mka:MK1214"/>
<dbReference type="PATRIC" id="fig|190192.8.peg.1316"/>
<dbReference type="HOGENOM" id="CLU_048704_0_0_2"/>
<dbReference type="InParanoid" id="Q8TW23"/>
<dbReference type="OrthoDB" id="21376at2157"/>
<dbReference type="Proteomes" id="UP000001826">
    <property type="component" value="Chromosome"/>
</dbReference>
<dbReference type="CDD" id="cd08025">
    <property type="entry name" value="RNR_PFL_like_DUF711"/>
    <property type="match status" value="1"/>
</dbReference>
<dbReference type="Gene3D" id="3.20.70.20">
    <property type="match status" value="1"/>
</dbReference>
<dbReference type="HAMAP" id="MF_01221">
    <property type="entry name" value="UPF0210"/>
    <property type="match status" value="1"/>
</dbReference>
<dbReference type="InterPro" id="IPR007841">
    <property type="entry name" value="UPF0210"/>
</dbReference>
<dbReference type="NCBIfam" id="NF003700">
    <property type="entry name" value="PRK05313.1"/>
    <property type="match status" value="1"/>
</dbReference>
<dbReference type="PANTHER" id="PTHR37560:SF1">
    <property type="entry name" value="UPF0210 PROTEIN MJ1665"/>
    <property type="match status" value="1"/>
</dbReference>
<dbReference type="PANTHER" id="PTHR37560">
    <property type="entry name" value="UPF0210 PROTEIN SPR0218"/>
    <property type="match status" value="1"/>
</dbReference>
<dbReference type="Pfam" id="PF05167">
    <property type="entry name" value="DUF711"/>
    <property type="match status" value="1"/>
</dbReference>
<dbReference type="SUPFAM" id="SSF51998">
    <property type="entry name" value="PFL-like glycyl radical enzymes"/>
    <property type="match status" value="1"/>
</dbReference>
<evidence type="ECO:0000255" key="1">
    <source>
        <dbReference type="HAMAP-Rule" id="MF_01221"/>
    </source>
</evidence>
<organism>
    <name type="scientific">Methanopyrus kandleri (strain AV19 / DSM 6324 / JCM 9639 / NBRC 100938)</name>
    <dbReference type="NCBI Taxonomy" id="190192"/>
    <lineage>
        <taxon>Archaea</taxon>
        <taxon>Methanobacteriati</taxon>
        <taxon>Methanobacteriota</taxon>
        <taxon>Methanomada group</taxon>
        <taxon>Methanopyri</taxon>
        <taxon>Methanopyrales</taxon>
        <taxon>Methanopyraceae</taxon>
        <taxon>Methanopyrus</taxon>
    </lineage>
</organism>
<proteinExistence type="inferred from homology"/>
<comment type="similarity">
    <text evidence="1">Belongs to the UPF0210 family.</text>
</comment>
<sequence>MSSLDVEEVIETIEMIRMRNLDVRAVTLGINLLDRAHPDPEELARDVREKIVEVAGDLVEVVEEVEDELGVPIVNKRIAVTPCSIVAASAVRKEGREAVLTLAEALDEAAEEVGVDYLGGYTALVYDGFTEADEAVLDTIPEAIEGTERLCASVVVADERYGINMDAVYRTAEAVKETAERTDGHGCARLVALTNAPENTPFMAGAFHGVGQPEACVNVGISGPGVVRAVVEELKDVDFRTLHDEIKRTAFKITRVGELVGRRVAERLGVEFGAVDLSLAPTPEEGDSVAEILEGIGLESCGCPGSTAALHLLMDAVKKGGAAATSRHGGYSEAFIPVSEDAGMARAAEEALTLEKLEAMTAVCSVGIDMVVVPGDTPVETIAGIIADEAAIGVVTGKPTAVRIIPAPGKEPGDEFEMGGLLGRAPVMDVSDYRPTMFRRDGRIPPKFPR</sequence>
<reference key="1">
    <citation type="journal article" date="2002" name="Proc. Natl. Acad. Sci. U.S.A.">
        <title>The complete genome of hyperthermophile Methanopyrus kandleri AV19 and monophyly of archaeal methanogens.</title>
        <authorList>
            <person name="Slesarev A.I."/>
            <person name="Mezhevaya K.V."/>
            <person name="Makarova K.S."/>
            <person name="Polushin N.N."/>
            <person name="Shcherbinina O.V."/>
            <person name="Shakhova V.V."/>
            <person name="Belova G.I."/>
            <person name="Aravind L."/>
            <person name="Natale D.A."/>
            <person name="Rogozin I.B."/>
            <person name="Tatusov R.L."/>
            <person name="Wolf Y.I."/>
            <person name="Stetter K.O."/>
            <person name="Malykh A.G."/>
            <person name="Koonin E.V."/>
            <person name="Kozyavkin S.A."/>
        </authorList>
    </citation>
    <scope>NUCLEOTIDE SEQUENCE [LARGE SCALE GENOMIC DNA]</scope>
    <source>
        <strain>AV19 / DSM 6324 / JCM 9639 / NBRC 100938</strain>
    </source>
</reference>
<keyword id="KW-1185">Reference proteome</keyword>
<accession>Q8TW23</accession>